<sequence length="410" mass="46530">MVLSQRQRDELNRAIADYLRSNGYEEAYSTFKKEAELDVNDELDKKFAGLLEKKWTSVIRLQKKVMELESKLNEAKEEITLGGPVGQKRDPKEWIPRPPEKYALSGHRSPVTRVIFHPVFSLMVSASEDATIKVWDYEAGDFERTLKGHTDSVQDISFDQTGKLLASCSADMTIKLWDFQGFECIRTMHGHDHNVSSVAIMPNGDHIVSASRDKTMKMWEVATGYCVKTFTGHREWVRMVRPNQDGTLLASCSNDQTVRVWVVATKECKAELREHEHVVECISWAPESAHPTISEATGSENKKSGKPGPFLLSGSRDKTIKMWDISTGMCLMTLVGHDNWVRGVLFHPGGRFVVSCADDKTLRIWDYKNKRCMKTLSAHEHFVTSLDFHKASPYVVTGSVDQTVKVWECR</sequence>
<accession>Q803D2</accession>
<accession>Q07DR2</accession>
<name>LIS1B_DANRE</name>
<organism>
    <name type="scientific">Danio rerio</name>
    <name type="common">Zebrafish</name>
    <name type="synonym">Brachydanio rerio</name>
    <dbReference type="NCBI Taxonomy" id="7955"/>
    <lineage>
        <taxon>Eukaryota</taxon>
        <taxon>Metazoa</taxon>
        <taxon>Chordata</taxon>
        <taxon>Craniata</taxon>
        <taxon>Vertebrata</taxon>
        <taxon>Euteleostomi</taxon>
        <taxon>Actinopterygii</taxon>
        <taxon>Neopterygii</taxon>
        <taxon>Teleostei</taxon>
        <taxon>Ostariophysi</taxon>
        <taxon>Cypriniformes</taxon>
        <taxon>Danionidae</taxon>
        <taxon>Danioninae</taxon>
        <taxon>Danio</taxon>
    </lineage>
</organism>
<evidence type="ECO:0000250" key="1">
    <source>
        <dbReference type="UniProtKB" id="P43033"/>
    </source>
</evidence>
<evidence type="ECO:0000255" key="2">
    <source>
        <dbReference type="HAMAP-Rule" id="MF_03141"/>
    </source>
</evidence>
<evidence type="ECO:0000269" key="3">
    <source>
    </source>
</evidence>
<evidence type="ECO:0000305" key="4"/>
<keyword id="KW-0131">Cell cycle</keyword>
<keyword id="KW-0132">Cell division</keyword>
<keyword id="KW-0175">Coiled coil</keyword>
<keyword id="KW-0963">Cytoplasm</keyword>
<keyword id="KW-0206">Cytoskeleton</keyword>
<keyword id="KW-0217">Developmental protein</keyword>
<keyword id="KW-0221">Differentiation</keyword>
<keyword id="KW-0493">Microtubule</keyword>
<keyword id="KW-0498">Mitosis</keyword>
<keyword id="KW-0524">Neurogenesis</keyword>
<keyword id="KW-1185">Reference proteome</keyword>
<keyword id="KW-0677">Repeat</keyword>
<keyword id="KW-0813">Transport</keyword>
<keyword id="KW-0853">WD repeat</keyword>
<protein>
    <recommendedName>
        <fullName evidence="2">Lissencephaly-1 homolog B</fullName>
    </recommendedName>
    <alternativeName>
        <fullName evidence="2">Platelet-activating factor acetylhydrolase IB subunit alpha b</fullName>
    </alternativeName>
</protein>
<gene>
    <name type="primary">pafah1b1b</name>
    <name evidence="2" type="synonym">lis1a</name>
</gene>
<reference key="1">
    <citation type="journal article" date="2007" name="Proc. Natl. Acad. Sci. U.S.A.">
        <title>Mechanism of positioning the cell nucleus in vertebrate photoreceptors.</title>
        <authorList>
            <person name="Tsujikawa M."/>
            <person name="Omori Y."/>
            <person name="Biyanwila J."/>
            <person name="Malicki J."/>
        </authorList>
    </citation>
    <scope>NUCLEOTIDE SEQUENCE [MRNA]</scope>
    <scope>FUNCTION</scope>
    <scope>TISSUE SPECIFICITY</scope>
</reference>
<reference key="2">
    <citation type="submission" date="2003-01" db="EMBL/GenBank/DDBJ databases">
        <authorList>
            <consortium name="NIH - Zebrafish Gene Collection (ZGC) project"/>
        </authorList>
    </citation>
    <scope>NUCLEOTIDE SEQUENCE [LARGE SCALE MRNA]</scope>
    <source>
        <strain>AB</strain>
    </source>
</reference>
<comment type="function">
    <text evidence="1 2 3">Regulatory subunit (beta subunit) of the cytosolic type I platelet-activating factor (PAF) acetylhydrolase (PAF-AH (I)), an enzyme that catalyzes the hydrolyze of the acetyl group at the sn-2 position of PAF and its analogs and participates in the PAF inactivation. Regulates the PAF-AH (I) activity in a catalytic dimer composition-dependent manner (By similarity). Positively regulates the activity of the minus-end directed microtubule motor protein dynein. May enhance dynein-mediated microtubule sliding by targeting dynein to the microtubule plus end. Required for several dynein- and microtubule-dependent processes such as the maintenance of Golgi integrity, the peripheral transport of microtubule fragments and the coupling of the nucleus and centrosome. May be required for proliferation of neuronal precursors and neuronal migration (By similarity). Involved in the positioning of nuclei in photoreceptor cells.</text>
</comment>
<comment type="subunit">
    <text evidence="1 2">Can self-associate. Component of the cytosolic PAF-AH (I) heterotetrameric enzyme, which is composed of PAFAH1B1 (beta), PAFAH1B2 (alpha2) and PAFAH1B3 (alpha1) subunits. The catalytic activity of the enzyme resides in the alpha1 (PAFAH1B3) and alpha2 (PAFAH1B2) subunits, whereas the beta subunit (PAFAH1B1) has regulatory activity. Trimer formation is not essential for the catalytic activity (By similarity). Interacts with dynein, dynactin, nde1 and ndel1.</text>
</comment>
<comment type="subcellular location">
    <subcellularLocation>
        <location evidence="2">Cytoplasm</location>
        <location evidence="2">Cytoskeleton</location>
    </subcellularLocation>
    <subcellularLocation>
        <location evidence="2">Cytoplasm</location>
        <location evidence="2">Cytoskeleton</location>
        <location evidence="2">Microtubule organizing center</location>
        <location evidence="2">Centrosome</location>
    </subcellularLocation>
    <text evidence="2">Localizes to the plus end of microtubules and to the centrosome.</text>
</comment>
<comment type="tissue specificity">
    <text evidence="3">Enriched in the photoreceptor cell layer.</text>
</comment>
<comment type="domain">
    <text evidence="2">Dimerization mediated by the LisH domain may be required to activate dynein.</text>
</comment>
<comment type="similarity">
    <text evidence="2">Belongs to the WD repeat LIS1/nudF family.</text>
</comment>
<proteinExistence type="evidence at transcript level"/>
<feature type="initiator methionine" description="Removed" evidence="2">
    <location>
        <position position="1"/>
    </location>
</feature>
<feature type="chain" id="PRO_0000240417" description="Lissencephaly-1 homolog B">
    <location>
        <begin position="2"/>
        <end position="410"/>
    </location>
</feature>
<feature type="domain" description="LisH" evidence="2">
    <location>
        <begin position="7"/>
        <end position="39"/>
    </location>
</feature>
<feature type="repeat" description="WD 1">
    <location>
        <begin position="106"/>
        <end position="147"/>
    </location>
</feature>
<feature type="repeat" description="WD 2">
    <location>
        <begin position="148"/>
        <end position="187"/>
    </location>
</feature>
<feature type="repeat" description="WD 3">
    <location>
        <begin position="190"/>
        <end position="229"/>
    </location>
</feature>
<feature type="repeat" description="WD 4">
    <location>
        <begin position="232"/>
        <end position="271"/>
    </location>
</feature>
<feature type="repeat" description="WD 5">
    <location>
        <begin position="274"/>
        <end position="333"/>
    </location>
</feature>
<feature type="repeat" description="WD 6">
    <location>
        <begin position="336"/>
        <end position="377"/>
    </location>
</feature>
<feature type="repeat" description="WD 7">
    <location>
        <begin position="379"/>
        <end position="410"/>
    </location>
</feature>
<feature type="coiled-coil region" evidence="2">
    <location>
        <begin position="56"/>
        <end position="82"/>
    </location>
</feature>
<feature type="sequence conflict" description="In Ref. 1; ABA29741." evidence="4" ref="1">
    <original>A</original>
    <variation>T</variation>
    <location>
        <position position="391"/>
    </location>
</feature>
<dbReference type="EMBL" id="DQ141216">
    <property type="protein sequence ID" value="ABA29741.1"/>
    <property type="molecule type" value="mRNA"/>
</dbReference>
<dbReference type="EMBL" id="BC044530">
    <property type="protein sequence ID" value="AAH44530.1"/>
    <property type="molecule type" value="mRNA"/>
</dbReference>
<dbReference type="RefSeq" id="NP_958503.1">
    <property type="nucleotide sequence ID" value="NM_201346.1"/>
</dbReference>
<dbReference type="SMR" id="Q803D2"/>
<dbReference type="FunCoup" id="Q803D2">
    <property type="interactions" value="2631"/>
</dbReference>
<dbReference type="STRING" id="7955.ENSDARP00000039257"/>
<dbReference type="PaxDb" id="7955-ENSDARP00000039257"/>
<dbReference type="GeneID" id="394247"/>
<dbReference type="KEGG" id="dre:394247"/>
<dbReference type="AGR" id="ZFIN:ZDB-GENE-040116-3"/>
<dbReference type="CTD" id="394247"/>
<dbReference type="ZFIN" id="ZDB-GENE-040116-3">
    <property type="gene designation" value="pafah1b1b"/>
</dbReference>
<dbReference type="eggNOG" id="KOG0295">
    <property type="taxonomic scope" value="Eukaryota"/>
</dbReference>
<dbReference type="InParanoid" id="Q803D2"/>
<dbReference type="OrthoDB" id="674604at2759"/>
<dbReference type="PhylomeDB" id="Q803D2"/>
<dbReference type="TreeFam" id="TF105741"/>
<dbReference type="Reactome" id="R-DRE-6811436">
    <property type="pathway name" value="COPI-independent Golgi-to-ER retrograde traffic"/>
</dbReference>
<dbReference type="PRO" id="PR:Q803D2"/>
<dbReference type="Proteomes" id="UP000000437">
    <property type="component" value="Chromosome 21"/>
</dbReference>
<dbReference type="GO" id="GO:0008247">
    <property type="term" value="C:1-alkyl-2-acetylglycerophosphocholine esterase complex"/>
    <property type="evidence" value="ECO:0000250"/>
    <property type="project" value="UniProtKB"/>
</dbReference>
<dbReference type="GO" id="GO:1904115">
    <property type="term" value="C:axon cytoplasm"/>
    <property type="evidence" value="ECO:0007669"/>
    <property type="project" value="GOC"/>
</dbReference>
<dbReference type="GO" id="GO:0005813">
    <property type="term" value="C:centrosome"/>
    <property type="evidence" value="ECO:0007669"/>
    <property type="project" value="UniProtKB-SubCell"/>
</dbReference>
<dbReference type="GO" id="GO:0005737">
    <property type="term" value="C:cytoplasm"/>
    <property type="evidence" value="ECO:0000314"/>
    <property type="project" value="ZFIN"/>
</dbReference>
<dbReference type="GO" id="GO:0005881">
    <property type="term" value="C:cytoplasmic microtubule"/>
    <property type="evidence" value="ECO:0000318"/>
    <property type="project" value="GO_Central"/>
</dbReference>
<dbReference type="GO" id="GO:0000776">
    <property type="term" value="C:kinetochore"/>
    <property type="evidence" value="ECO:0000318"/>
    <property type="project" value="GO_Central"/>
</dbReference>
<dbReference type="GO" id="GO:0005875">
    <property type="term" value="C:microtubule associated complex"/>
    <property type="evidence" value="ECO:0000318"/>
    <property type="project" value="GO_Central"/>
</dbReference>
<dbReference type="GO" id="GO:0043005">
    <property type="term" value="C:neuron projection"/>
    <property type="evidence" value="ECO:0000318"/>
    <property type="project" value="GO_Central"/>
</dbReference>
<dbReference type="GO" id="GO:0043025">
    <property type="term" value="C:neuronal cell body"/>
    <property type="evidence" value="ECO:0000318"/>
    <property type="project" value="GO_Central"/>
</dbReference>
<dbReference type="GO" id="GO:0005635">
    <property type="term" value="C:nuclear envelope"/>
    <property type="evidence" value="ECO:0000318"/>
    <property type="project" value="GO_Central"/>
</dbReference>
<dbReference type="GO" id="GO:0070840">
    <property type="term" value="F:dynein complex binding"/>
    <property type="evidence" value="ECO:0000318"/>
    <property type="project" value="GO_Central"/>
</dbReference>
<dbReference type="GO" id="GO:0051010">
    <property type="term" value="F:microtubule plus-end binding"/>
    <property type="evidence" value="ECO:0000318"/>
    <property type="project" value="GO_Central"/>
</dbReference>
<dbReference type="GO" id="GO:0046982">
    <property type="term" value="F:protein heterodimerization activity"/>
    <property type="evidence" value="ECO:0000250"/>
    <property type="project" value="UniProtKB"/>
</dbReference>
<dbReference type="GO" id="GO:0045176">
    <property type="term" value="P:apical protein localization"/>
    <property type="evidence" value="ECO:0000315"/>
    <property type="project" value="ZFIN"/>
</dbReference>
<dbReference type="GO" id="GO:0048854">
    <property type="term" value="P:brain morphogenesis"/>
    <property type="evidence" value="ECO:0000315"/>
    <property type="project" value="ZFIN"/>
</dbReference>
<dbReference type="GO" id="GO:0051301">
    <property type="term" value="P:cell division"/>
    <property type="evidence" value="ECO:0007669"/>
    <property type="project" value="UniProtKB-KW"/>
</dbReference>
<dbReference type="GO" id="GO:0000132">
    <property type="term" value="P:establishment of mitotic spindle orientation"/>
    <property type="evidence" value="ECO:0000318"/>
    <property type="project" value="GO_Central"/>
</dbReference>
<dbReference type="GO" id="GO:0007281">
    <property type="term" value="P:germ cell development"/>
    <property type="evidence" value="ECO:0000318"/>
    <property type="project" value="GO_Central"/>
</dbReference>
<dbReference type="GO" id="GO:0031023">
    <property type="term" value="P:microtubule organizing center organization"/>
    <property type="evidence" value="ECO:0000318"/>
    <property type="project" value="GO_Central"/>
</dbReference>
<dbReference type="GO" id="GO:0051012">
    <property type="term" value="P:microtubule sliding"/>
    <property type="evidence" value="ECO:0007669"/>
    <property type="project" value="UniProtKB-UniRule"/>
</dbReference>
<dbReference type="GO" id="GO:0007097">
    <property type="term" value="P:nuclear migration"/>
    <property type="evidence" value="ECO:0000315"/>
    <property type="project" value="ZFIN"/>
</dbReference>
<dbReference type="GO" id="GO:0045494">
    <property type="term" value="P:photoreceptor cell maintenance"/>
    <property type="evidence" value="ECO:0000315"/>
    <property type="project" value="ZFIN"/>
</dbReference>
<dbReference type="GO" id="GO:0038026">
    <property type="term" value="P:reelin-mediated signaling pathway"/>
    <property type="evidence" value="ECO:0000250"/>
    <property type="project" value="UniProtKB"/>
</dbReference>
<dbReference type="GO" id="GO:0008090">
    <property type="term" value="P:retrograde axonal transport"/>
    <property type="evidence" value="ECO:0000318"/>
    <property type="project" value="GO_Central"/>
</dbReference>
<dbReference type="GO" id="GO:0047496">
    <property type="term" value="P:vesicle transport along microtubule"/>
    <property type="evidence" value="ECO:0000318"/>
    <property type="project" value="GO_Central"/>
</dbReference>
<dbReference type="CDD" id="cd00200">
    <property type="entry name" value="WD40"/>
    <property type="match status" value="1"/>
</dbReference>
<dbReference type="FunFam" id="2.130.10.10:FF:000038">
    <property type="entry name" value="Lissencephaly-1 homolog B"/>
    <property type="match status" value="1"/>
</dbReference>
<dbReference type="FunFam" id="1.20.960.30:FF:000002">
    <property type="entry name" value="Platelet-activating factor acetylhydrolase ib"/>
    <property type="match status" value="1"/>
</dbReference>
<dbReference type="Gene3D" id="1.20.960.30">
    <property type="match status" value="1"/>
</dbReference>
<dbReference type="Gene3D" id="2.130.10.10">
    <property type="entry name" value="YVTN repeat-like/Quinoprotein amine dehydrogenase"/>
    <property type="match status" value="1"/>
</dbReference>
<dbReference type="HAMAP" id="MF_03141">
    <property type="entry name" value="lis1"/>
    <property type="match status" value="1"/>
</dbReference>
<dbReference type="InterPro" id="IPR017252">
    <property type="entry name" value="Dynein_regulator_LIS1"/>
</dbReference>
<dbReference type="InterPro" id="IPR020472">
    <property type="entry name" value="G-protein_beta_WD-40_rep"/>
</dbReference>
<dbReference type="InterPro" id="IPR037190">
    <property type="entry name" value="LIS1_N"/>
</dbReference>
<dbReference type="InterPro" id="IPR006594">
    <property type="entry name" value="LisH"/>
</dbReference>
<dbReference type="InterPro" id="IPR056795">
    <property type="entry name" value="PAC1-like_LisH-like_dom"/>
</dbReference>
<dbReference type="InterPro" id="IPR015943">
    <property type="entry name" value="WD40/YVTN_repeat-like_dom_sf"/>
</dbReference>
<dbReference type="InterPro" id="IPR019775">
    <property type="entry name" value="WD40_repeat_CS"/>
</dbReference>
<dbReference type="InterPro" id="IPR036322">
    <property type="entry name" value="WD40_repeat_dom_sf"/>
</dbReference>
<dbReference type="InterPro" id="IPR001680">
    <property type="entry name" value="WD40_rpt"/>
</dbReference>
<dbReference type="InterPro" id="IPR050349">
    <property type="entry name" value="WD_LIS1/nudF_dynein_reg"/>
</dbReference>
<dbReference type="PANTHER" id="PTHR44129">
    <property type="entry name" value="WD REPEAT-CONTAINING PROTEIN POP1"/>
    <property type="match status" value="1"/>
</dbReference>
<dbReference type="Pfam" id="PF24951">
    <property type="entry name" value="LisH_PAC1"/>
    <property type="match status" value="1"/>
</dbReference>
<dbReference type="Pfam" id="PF00400">
    <property type="entry name" value="WD40"/>
    <property type="match status" value="7"/>
</dbReference>
<dbReference type="PIRSF" id="PIRSF037647">
    <property type="entry name" value="Dynein_regulator_Lis1"/>
    <property type="match status" value="1"/>
</dbReference>
<dbReference type="PRINTS" id="PR00320">
    <property type="entry name" value="GPROTEINBRPT"/>
</dbReference>
<dbReference type="SMART" id="SM00667">
    <property type="entry name" value="LisH"/>
    <property type="match status" value="1"/>
</dbReference>
<dbReference type="SMART" id="SM00320">
    <property type="entry name" value="WD40"/>
    <property type="match status" value="7"/>
</dbReference>
<dbReference type="SUPFAM" id="SSF109925">
    <property type="entry name" value="Lissencephaly-1 protein (Lis-1, PAF-AH alpha) N-terminal domain"/>
    <property type="match status" value="1"/>
</dbReference>
<dbReference type="SUPFAM" id="SSF50978">
    <property type="entry name" value="WD40 repeat-like"/>
    <property type="match status" value="1"/>
</dbReference>
<dbReference type="PROSITE" id="PS50896">
    <property type="entry name" value="LISH"/>
    <property type="match status" value="1"/>
</dbReference>
<dbReference type="PROSITE" id="PS00678">
    <property type="entry name" value="WD_REPEATS_1"/>
    <property type="match status" value="4"/>
</dbReference>
<dbReference type="PROSITE" id="PS50082">
    <property type="entry name" value="WD_REPEATS_2"/>
    <property type="match status" value="7"/>
</dbReference>
<dbReference type="PROSITE" id="PS50294">
    <property type="entry name" value="WD_REPEATS_REGION"/>
    <property type="match status" value="1"/>
</dbReference>